<evidence type="ECO:0000255" key="1"/>
<evidence type="ECO:0000269" key="2">
    <source>
    </source>
</evidence>
<evidence type="ECO:0000305" key="3"/>
<name>CC50C_MOUSE</name>
<comment type="subcellular location">
    <subcellularLocation>
        <location evidence="3">Membrane</location>
        <topology evidence="3">Multi-pass membrane protein</topology>
    </subcellularLocation>
</comment>
<comment type="tissue specificity">
    <text evidence="2">Specifically expressed in testis.</text>
</comment>
<comment type="similarity">
    <text evidence="3">Belongs to the CDC50/LEM3 family.</text>
</comment>
<sequence>MEMMPQYDLSRLPENTALKQQTLPTQQLNLSASVVLSIFFITGGFCLSIGIILLLSAKSTKKIEINYTKTCANCAQLRENSSNFDKACNCSLPFYLPEKMEGDVYMYYKLYGFYQNLYQYILSRSNSQLVGKDIWDTTNCDPFQVSHNDTPIIPCGAIANSIFNDTITLSYNLNSSTQIEVPMLKSGLTWWTDKYVKFRNPRSSNFTSTFAGSSKPLHWAKPIYELDLDDPGNNGFLNEDFIVWMRTAAFPTFKKLYRRLKRVHAFAEGLPAGNYSLSISYNFPVTMFQGEKSIVLSTLTWIGGGGLFLGLTYTVTGALTLLASFAILTIHLMLKRSKLNFL</sequence>
<dbReference type="EMBL" id="AK016597">
    <property type="protein sequence ID" value="BAB30332.1"/>
    <property type="molecule type" value="mRNA"/>
</dbReference>
<dbReference type="EMBL" id="CT025521">
    <property type="status" value="NOT_ANNOTATED_CDS"/>
    <property type="molecule type" value="Genomic_DNA"/>
</dbReference>
<dbReference type="EMBL" id="CH466521">
    <property type="protein sequence ID" value="EDK98171.1"/>
    <property type="molecule type" value="Genomic_DNA"/>
</dbReference>
<dbReference type="CCDS" id="CCDS49876.1"/>
<dbReference type="RefSeq" id="NP_081927.1">
    <property type="nucleotide sequence ID" value="NM_027651.1"/>
</dbReference>
<dbReference type="RefSeq" id="XP_011244314.1">
    <property type="nucleotide sequence ID" value="XM_011246012.4"/>
</dbReference>
<dbReference type="RefSeq" id="XP_011244316.1">
    <property type="nucleotide sequence ID" value="XM_011246014.4"/>
</dbReference>
<dbReference type="RefSeq" id="XP_017172622.1">
    <property type="nucleotide sequence ID" value="XM_017317133.1"/>
</dbReference>
<dbReference type="SMR" id="Q9D4D7"/>
<dbReference type="FunCoup" id="Q9D4D7">
    <property type="interactions" value="391"/>
</dbReference>
<dbReference type="STRING" id="10090.ENSMUSP00000023434"/>
<dbReference type="GlyCosmos" id="Q9D4D7">
    <property type="glycosylation" value="4 sites, No reported glycans"/>
</dbReference>
<dbReference type="GlyGen" id="Q9D4D7">
    <property type="glycosylation" value="4 sites"/>
</dbReference>
<dbReference type="PaxDb" id="10090-ENSMUSP00000023434"/>
<dbReference type="ProteomicsDB" id="283721"/>
<dbReference type="DNASU" id="71027"/>
<dbReference type="Ensembl" id="ENSMUST00000023434.15">
    <property type="protein sequence ID" value="ENSMUSP00000023434.9"/>
    <property type="gene ID" value="ENSMUSG00000022753.16"/>
</dbReference>
<dbReference type="Ensembl" id="ENSMUST00000119407.8">
    <property type="protein sequence ID" value="ENSMUSP00000112989.2"/>
    <property type="gene ID" value="ENSMUSG00000022753.16"/>
</dbReference>
<dbReference type="GeneID" id="71027"/>
<dbReference type="KEGG" id="mmu:71027"/>
<dbReference type="UCSC" id="uc007zne.2">
    <property type="organism name" value="mouse"/>
</dbReference>
<dbReference type="AGR" id="MGI:1918277"/>
<dbReference type="CTD" id="71027"/>
<dbReference type="MGI" id="MGI:1918277">
    <property type="gene designation" value="Tmem30c"/>
</dbReference>
<dbReference type="VEuPathDB" id="HostDB:ENSMUSG00000022753"/>
<dbReference type="eggNOG" id="KOG2952">
    <property type="taxonomic scope" value="Eukaryota"/>
</dbReference>
<dbReference type="GeneTree" id="ENSGT00390000004660"/>
<dbReference type="InParanoid" id="Q9D4D7"/>
<dbReference type="OMA" id="NDIFWLH"/>
<dbReference type="OrthoDB" id="340608at2759"/>
<dbReference type="PhylomeDB" id="Q9D4D7"/>
<dbReference type="TreeFam" id="TF300873"/>
<dbReference type="BioGRID-ORCS" id="71027">
    <property type="hits" value="2 hits in 78 CRISPR screens"/>
</dbReference>
<dbReference type="ChiTaRS" id="Tmem30c">
    <property type="organism name" value="mouse"/>
</dbReference>
<dbReference type="PRO" id="PR:Q9D4D7"/>
<dbReference type="Proteomes" id="UP000000589">
    <property type="component" value="Chromosome 16"/>
</dbReference>
<dbReference type="RNAct" id="Q9D4D7">
    <property type="molecule type" value="protein"/>
</dbReference>
<dbReference type="Bgee" id="ENSMUSG00000022753">
    <property type="expression patterns" value="Expressed in spermatocyte and 24 other cell types or tissues"/>
</dbReference>
<dbReference type="ExpressionAtlas" id="Q9D4D7">
    <property type="expression patterns" value="baseline and differential"/>
</dbReference>
<dbReference type="GO" id="GO:0016020">
    <property type="term" value="C:membrane"/>
    <property type="evidence" value="ECO:0007669"/>
    <property type="project" value="UniProtKB-SubCell"/>
</dbReference>
<dbReference type="InterPro" id="IPR005045">
    <property type="entry name" value="CDC50/LEM3_fam"/>
</dbReference>
<dbReference type="PANTHER" id="PTHR10926">
    <property type="entry name" value="CELL CYCLE CONTROL PROTEIN 50"/>
    <property type="match status" value="1"/>
</dbReference>
<dbReference type="PANTHER" id="PTHR10926:SF1">
    <property type="entry name" value="CELL CYCLE CONTROL PROTEIN 50C"/>
    <property type="match status" value="1"/>
</dbReference>
<dbReference type="Pfam" id="PF03381">
    <property type="entry name" value="CDC50"/>
    <property type="match status" value="1"/>
</dbReference>
<dbReference type="PIRSF" id="PIRSF015840">
    <property type="entry name" value="DUF284_TM_euk"/>
    <property type="match status" value="1"/>
</dbReference>
<feature type="chain" id="PRO_0000292847" description="Cell cycle control protein 50C">
    <location>
        <begin position="1"/>
        <end position="342"/>
    </location>
</feature>
<feature type="topological domain" description="Cytoplasmic" evidence="1">
    <location>
        <begin position="1"/>
        <end position="33"/>
    </location>
</feature>
<feature type="transmembrane region" description="Helical" evidence="1">
    <location>
        <begin position="34"/>
        <end position="54"/>
    </location>
</feature>
<feature type="topological domain" description="Extracellular" evidence="1">
    <location>
        <begin position="55"/>
        <end position="306"/>
    </location>
</feature>
<feature type="transmembrane region" description="Helical" evidence="1">
    <location>
        <begin position="307"/>
        <end position="327"/>
    </location>
</feature>
<feature type="topological domain" description="Cytoplasmic" evidence="1">
    <location>
        <begin position="328"/>
        <end position="342"/>
    </location>
</feature>
<feature type="glycosylation site" description="N-linked (GlcNAc...) asparagine" evidence="1">
    <location>
        <position position="66"/>
    </location>
</feature>
<feature type="glycosylation site" description="N-linked (GlcNAc...) asparagine" evidence="1">
    <location>
        <position position="80"/>
    </location>
</feature>
<feature type="glycosylation site" description="N-linked (GlcNAc...) asparagine" evidence="1">
    <location>
        <position position="89"/>
    </location>
</feature>
<feature type="glycosylation site" description="N-linked (GlcNAc...) asparagine" evidence="1">
    <location>
        <position position="205"/>
    </location>
</feature>
<feature type="sequence conflict" description="In Ref. 1; BAB30332." evidence="3" ref="1">
    <original>C</original>
    <variation>Y</variation>
    <location>
        <position position="90"/>
    </location>
</feature>
<feature type="sequence conflict" description="In Ref. 1; BAB30332." evidence="3" ref="1">
    <original>G</original>
    <variation>E</variation>
    <location>
        <position position="232"/>
    </location>
</feature>
<feature type="sequence conflict" description="In Ref. 1; BAB30332." evidence="3" ref="1">
    <original>G</original>
    <variation>A</variation>
    <location>
        <position position="235"/>
    </location>
</feature>
<feature type="sequence conflict" description="In Ref. 1; BAB30332." evidence="3" ref="1">
    <original>K</original>
    <variation>T</variation>
    <location>
        <position position="255"/>
    </location>
</feature>
<feature type="sequence conflict" description="In Ref. 1; BAB30332." evidence="3" ref="1">
    <original>G</original>
    <variation>E</variation>
    <location>
        <position position="290"/>
    </location>
</feature>
<protein>
    <recommendedName>
        <fullName>Cell cycle control protein 50C</fullName>
    </recommendedName>
    <alternativeName>
        <fullName>Transmembrane protein 30C</fullName>
    </alternativeName>
</protein>
<reference key="1">
    <citation type="journal article" date="2005" name="Science">
        <title>The transcriptional landscape of the mammalian genome.</title>
        <authorList>
            <person name="Carninci P."/>
            <person name="Kasukawa T."/>
            <person name="Katayama S."/>
            <person name="Gough J."/>
            <person name="Frith M.C."/>
            <person name="Maeda N."/>
            <person name="Oyama R."/>
            <person name="Ravasi T."/>
            <person name="Lenhard B."/>
            <person name="Wells C."/>
            <person name="Kodzius R."/>
            <person name="Shimokawa K."/>
            <person name="Bajic V.B."/>
            <person name="Brenner S.E."/>
            <person name="Batalov S."/>
            <person name="Forrest A.R."/>
            <person name="Zavolan M."/>
            <person name="Davis M.J."/>
            <person name="Wilming L.G."/>
            <person name="Aidinis V."/>
            <person name="Allen J.E."/>
            <person name="Ambesi-Impiombato A."/>
            <person name="Apweiler R."/>
            <person name="Aturaliya R.N."/>
            <person name="Bailey T.L."/>
            <person name="Bansal M."/>
            <person name="Baxter L."/>
            <person name="Beisel K.W."/>
            <person name="Bersano T."/>
            <person name="Bono H."/>
            <person name="Chalk A.M."/>
            <person name="Chiu K.P."/>
            <person name="Choudhary V."/>
            <person name="Christoffels A."/>
            <person name="Clutterbuck D.R."/>
            <person name="Crowe M.L."/>
            <person name="Dalla E."/>
            <person name="Dalrymple B.P."/>
            <person name="de Bono B."/>
            <person name="Della Gatta G."/>
            <person name="di Bernardo D."/>
            <person name="Down T."/>
            <person name="Engstrom P."/>
            <person name="Fagiolini M."/>
            <person name="Faulkner G."/>
            <person name="Fletcher C.F."/>
            <person name="Fukushima T."/>
            <person name="Furuno M."/>
            <person name="Futaki S."/>
            <person name="Gariboldi M."/>
            <person name="Georgii-Hemming P."/>
            <person name="Gingeras T.R."/>
            <person name="Gojobori T."/>
            <person name="Green R.E."/>
            <person name="Gustincich S."/>
            <person name="Harbers M."/>
            <person name="Hayashi Y."/>
            <person name="Hensch T.K."/>
            <person name="Hirokawa N."/>
            <person name="Hill D."/>
            <person name="Huminiecki L."/>
            <person name="Iacono M."/>
            <person name="Ikeo K."/>
            <person name="Iwama A."/>
            <person name="Ishikawa T."/>
            <person name="Jakt M."/>
            <person name="Kanapin A."/>
            <person name="Katoh M."/>
            <person name="Kawasawa Y."/>
            <person name="Kelso J."/>
            <person name="Kitamura H."/>
            <person name="Kitano H."/>
            <person name="Kollias G."/>
            <person name="Krishnan S.P."/>
            <person name="Kruger A."/>
            <person name="Kummerfeld S.K."/>
            <person name="Kurochkin I.V."/>
            <person name="Lareau L.F."/>
            <person name="Lazarevic D."/>
            <person name="Lipovich L."/>
            <person name="Liu J."/>
            <person name="Liuni S."/>
            <person name="McWilliam S."/>
            <person name="Madan Babu M."/>
            <person name="Madera M."/>
            <person name="Marchionni L."/>
            <person name="Matsuda H."/>
            <person name="Matsuzawa S."/>
            <person name="Miki H."/>
            <person name="Mignone F."/>
            <person name="Miyake S."/>
            <person name="Morris K."/>
            <person name="Mottagui-Tabar S."/>
            <person name="Mulder N."/>
            <person name="Nakano N."/>
            <person name="Nakauchi H."/>
            <person name="Ng P."/>
            <person name="Nilsson R."/>
            <person name="Nishiguchi S."/>
            <person name="Nishikawa S."/>
            <person name="Nori F."/>
            <person name="Ohara O."/>
            <person name="Okazaki Y."/>
            <person name="Orlando V."/>
            <person name="Pang K.C."/>
            <person name="Pavan W.J."/>
            <person name="Pavesi G."/>
            <person name="Pesole G."/>
            <person name="Petrovsky N."/>
            <person name="Piazza S."/>
            <person name="Reed J."/>
            <person name="Reid J.F."/>
            <person name="Ring B.Z."/>
            <person name="Ringwald M."/>
            <person name="Rost B."/>
            <person name="Ruan Y."/>
            <person name="Salzberg S.L."/>
            <person name="Sandelin A."/>
            <person name="Schneider C."/>
            <person name="Schoenbach C."/>
            <person name="Sekiguchi K."/>
            <person name="Semple C.A."/>
            <person name="Seno S."/>
            <person name="Sessa L."/>
            <person name="Sheng Y."/>
            <person name="Shibata Y."/>
            <person name="Shimada H."/>
            <person name="Shimada K."/>
            <person name="Silva D."/>
            <person name="Sinclair B."/>
            <person name="Sperling S."/>
            <person name="Stupka E."/>
            <person name="Sugiura K."/>
            <person name="Sultana R."/>
            <person name="Takenaka Y."/>
            <person name="Taki K."/>
            <person name="Tammoja K."/>
            <person name="Tan S.L."/>
            <person name="Tang S."/>
            <person name="Taylor M.S."/>
            <person name="Tegner J."/>
            <person name="Teichmann S.A."/>
            <person name="Ueda H.R."/>
            <person name="van Nimwegen E."/>
            <person name="Verardo R."/>
            <person name="Wei C.L."/>
            <person name="Yagi K."/>
            <person name="Yamanishi H."/>
            <person name="Zabarovsky E."/>
            <person name="Zhu S."/>
            <person name="Zimmer A."/>
            <person name="Hide W."/>
            <person name="Bult C."/>
            <person name="Grimmond S.M."/>
            <person name="Teasdale R.D."/>
            <person name="Liu E.T."/>
            <person name="Brusic V."/>
            <person name="Quackenbush J."/>
            <person name="Wahlestedt C."/>
            <person name="Mattick J.S."/>
            <person name="Hume D.A."/>
            <person name="Kai C."/>
            <person name="Sasaki D."/>
            <person name="Tomaru Y."/>
            <person name="Fukuda S."/>
            <person name="Kanamori-Katayama M."/>
            <person name="Suzuki M."/>
            <person name="Aoki J."/>
            <person name="Arakawa T."/>
            <person name="Iida J."/>
            <person name="Imamura K."/>
            <person name="Itoh M."/>
            <person name="Kato T."/>
            <person name="Kawaji H."/>
            <person name="Kawagashira N."/>
            <person name="Kawashima T."/>
            <person name="Kojima M."/>
            <person name="Kondo S."/>
            <person name="Konno H."/>
            <person name="Nakano K."/>
            <person name="Ninomiya N."/>
            <person name="Nishio T."/>
            <person name="Okada M."/>
            <person name="Plessy C."/>
            <person name="Shibata K."/>
            <person name="Shiraki T."/>
            <person name="Suzuki S."/>
            <person name="Tagami M."/>
            <person name="Waki K."/>
            <person name="Watahiki A."/>
            <person name="Okamura-Oho Y."/>
            <person name="Suzuki H."/>
            <person name="Kawai J."/>
            <person name="Hayashizaki Y."/>
        </authorList>
    </citation>
    <scope>NUCLEOTIDE SEQUENCE [LARGE SCALE MRNA]</scope>
    <source>
        <strain>C57BL/6J</strain>
        <tissue>Testis</tissue>
    </source>
</reference>
<reference key="2">
    <citation type="journal article" date="2009" name="PLoS Biol.">
        <title>Lineage-specific biology revealed by a finished genome assembly of the mouse.</title>
        <authorList>
            <person name="Church D.M."/>
            <person name="Goodstadt L."/>
            <person name="Hillier L.W."/>
            <person name="Zody M.C."/>
            <person name="Goldstein S."/>
            <person name="She X."/>
            <person name="Bult C.J."/>
            <person name="Agarwala R."/>
            <person name="Cherry J.L."/>
            <person name="DiCuccio M."/>
            <person name="Hlavina W."/>
            <person name="Kapustin Y."/>
            <person name="Meric P."/>
            <person name="Maglott D."/>
            <person name="Birtle Z."/>
            <person name="Marques A.C."/>
            <person name="Graves T."/>
            <person name="Zhou S."/>
            <person name="Teague B."/>
            <person name="Potamousis K."/>
            <person name="Churas C."/>
            <person name="Place M."/>
            <person name="Herschleb J."/>
            <person name="Runnheim R."/>
            <person name="Forrest D."/>
            <person name="Amos-Landgraf J."/>
            <person name="Schwartz D.C."/>
            <person name="Cheng Z."/>
            <person name="Lindblad-Toh K."/>
            <person name="Eichler E.E."/>
            <person name="Ponting C.P."/>
        </authorList>
    </citation>
    <scope>NUCLEOTIDE SEQUENCE [LARGE SCALE GENOMIC DNA]</scope>
    <source>
        <strain>C57BL/6J</strain>
    </source>
</reference>
<reference key="3">
    <citation type="submission" date="2005-07" db="EMBL/GenBank/DDBJ databases">
        <authorList>
            <person name="Mural R.J."/>
            <person name="Adams M.D."/>
            <person name="Myers E.W."/>
            <person name="Smith H.O."/>
            <person name="Venter J.C."/>
        </authorList>
    </citation>
    <scope>NUCLEOTIDE SEQUENCE [LARGE SCALE GENOMIC DNA]</scope>
</reference>
<reference key="4">
    <citation type="journal article" date="2007" name="Gene">
        <title>Aberrant termination of reproduction-related TMEM30C transcripts in the hominoids.</title>
        <authorList>
            <person name="Osada N."/>
            <person name="Hashimoto K."/>
            <person name="Hirai M."/>
            <person name="Kusuda J."/>
        </authorList>
    </citation>
    <scope>TISSUE SPECIFICITY</scope>
</reference>
<organism>
    <name type="scientific">Mus musculus</name>
    <name type="common">Mouse</name>
    <dbReference type="NCBI Taxonomy" id="10090"/>
    <lineage>
        <taxon>Eukaryota</taxon>
        <taxon>Metazoa</taxon>
        <taxon>Chordata</taxon>
        <taxon>Craniata</taxon>
        <taxon>Vertebrata</taxon>
        <taxon>Euteleostomi</taxon>
        <taxon>Mammalia</taxon>
        <taxon>Eutheria</taxon>
        <taxon>Euarchontoglires</taxon>
        <taxon>Glires</taxon>
        <taxon>Rodentia</taxon>
        <taxon>Myomorpha</taxon>
        <taxon>Muroidea</taxon>
        <taxon>Muridae</taxon>
        <taxon>Murinae</taxon>
        <taxon>Mus</taxon>
        <taxon>Mus</taxon>
    </lineage>
</organism>
<gene>
    <name type="primary">Tmem30c</name>
    <name type="synonym">Cdc50c</name>
</gene>
<keyword id="KW-0325">Glycoprotein</keyword>
<keyword id="KW-0472">Membrane</keyword>
<keyword id="KW-1185">Reference proteome</keyword>
<keyword id="KW-0812">Transmembrane</keyword>
<keyword id="KW-1133">Transmembrane helix</keyword>
<proteinExistence type="evidence at transcript level"/>
<accession>Q9D4D7</accession>
<accession>A9C447</accession>